<organism>
    <name type="scientific">Cereibacter sphaeroides (strain ATCC 17025 / ATH 2.4.3)</name>
    <name type="common">Rhodobacter sphaeroides</name>
    <dbReference type="NCBI Taxonomy" id="349102"/>
    <lineage>
        <taxon>Bacteria</taxon>
        <taxon>Pseudomonadati</taxon>
        <taxon>Pseudomonadota</taxon>
        <taxon>Alphaproteobacteria</taxon>
        <taxon>Rhodobacterales</taxon>
        <taxon>Paracoccaceae</taxon>
        <taxon>Cereibacter</taxon>
    </lineage>
</organism>
<name>GLGC_CERS5</name>
<proteinExistence type="inferred from homology"/>
<feature type="chain" id="PRO_1000051580" description="Glucose-1-phosphate adenylyltransferase">
    <location>
        <begin position="1"/>
        <end position="423"/>
    </location>
</feature>
<feature type="binding site" evidence="1">
    <location>
        <position position="107"/>
    </location>
    <ligand>
        <name>alpha-D-glucose 1-phosphate</name>
        <dbReference type="ChEBI" id="CHEBI:58601"/>
    </ligand>
</feature>
<feature type="binding site" evidence="1">
    <location>
        <position position="172"/>
    </location>
    <ligand>
        <name>alpha-D-glucose 1-phosphate</name>
        <dbReference type="ChEBI" id="CHEBI:58601"/>
    </ligand>
</feature>
<feature type="binding site" evidence="1">
    <location>
        <begin position="187"/>
        <end position="188"/>
    </location>
    <ligand>
        <name>alpha-D-glucose 1-phosphate</name>
        <dbReference type="ChEBI" id="CHEBI:58601"/>
    </ligand>
</feature>
<feature type="binding site" evidence="1">
    <location>
        <position position="205"/>
    </location>
    <ligand>
        <name>alpha-D-glucose 1-phosphate</name>
        <dbReference type="ChEBI" id="CHEBI:58601"/>
    </ligand>
</feature>
<keyword id="KW-0067">ATP-binding</keyword>
<keyword id="KW-0119">Carbohydrate metabolism</keyword>
<keyword id="KW-0320">Glycogen biosynthesis</keyword>
<keyword id="KW-0321">Glycogen metabolism</keyword>
<keyword id="KW-0547">Nucleotide-binding</keyword>
<keyword id="KW-0548">Nucleotidyltransferase</keyword>
<keyword id="KW-0808">Transferase</keyword>
<protein>
    <recommendedName>
        <fullName evidence="1">Glucose-1-phosphate adenylyltransferase</fullName>
        <ecNumber evidence="1">2.7.7.27</ecNumber>
    </recommendedName>
    <alternativeName>
        <fullName evidence="1">ADP-glucose pyrophosphorylase</fullName>
        <shortName evidence="1">ADPGlc PPase</shortName>
    </alternativeName>
    <alternativeName>
        <fullName evidence="1">ADP-glucose synthase</fullName>
    </alternativeName>
</protein>
<gene>
    <name evidence="1" type="primary">glgC</name>
    <name type="ordered locus">Rsph17025_1134</name>
</gene>
<accession>A4WRM1</accession>
<reference key="1">
    <citation type="submission" date="2007-04" db="EMBL/GenBank/DDBJ databases">
        <title>Complete sequence of chromosome of Rhodobacter sphaeroides ATCC 17025.</title>
        <authorList>
            <consortium name="US DOE Joint Genome Institute"/>
            <person name="Copeland A."/>
            <person name="Lucas S."/>
            <person name="Lapidus A."/>
            <person name="Barry K."/>
            <person name="Detter J.C."/>
            <person name="Glavina del Rio T."/>
            <person name="Hammon N."/>
            <person name="Israni S."/>
            <person name="Dalin E."/>
            <person name="Tice H."/>
            <person name="Pitluck S."/>
            <person name="Chertkov O."/>
            <person name="Brettin T."/>
            <person name="Bruce D."/>
            <person name="Han C."/>
            <person name="Schmutz J."/>
            <person name="Larimer F."/>
            <person name="Land M."/>
            <person name="Hauser L."/>
            <person name="Kyrpides N."/>
            <person name="Kim E."/>
            <person name="Richardson P."/>
            <person name="Mackenzie C."/>
            <person name="Choudhary M."/>
            <person name="Donohue T.J."/>
            <person name="Kaplan S."/>
        </authorList>
    </citation>
    <scope>NUCLEOTIDE SEQUENCE [LARGE SCALE GENOMIC DNA]</scope>
    <source>
        <strain>ATCC 17025 / ATH 2.4.3</strain>
    </source>
</reference>
<sequence length="423" mass="47420">MKAQPPLRLTSQAMAFVLAGGRGSRLKELTDRRAKPAVYFGGKARIIDFALSNAMNSGIRKMAIATQYKAHSLIRHIQRGWNFFREERNEYLDILPASQRVDEHKWYLGTADAVTQNIDIVDSYDIKYVIILAGDHVYKMDYEIMLRQHCETGADVTIGCLTVPRMEATAFGVMHVDASLRITDFLEKPADPPGIPGDEGNALASMGIYVFDWAFLRDLLIRDAEDPNSSHDFGHDLIPAIVRNGKAMAHRFSDSCVMTGLETEPYWRDVGTIDAFWQANIDLTDFTPKLDLYDREWPIWTYSQIVPPAKFIHDSERRRGMAISSLVSGDCIVSGSEIRSSLLFTGCRTHSYSSLSHVVALPHVTVNRKADLTNCVLDRGVVIPEGLVIGQEPEEDARWFRRSEGGIVLVTQDMLDARARALG</sequence>
<dbReference type="EC" id="2.7.7.27" evidence="1"/>
<dbReference type="EMBL" id="CP000661">
    <property type="protein sequence ID" value="ABP70035.1"/>
    <property type="molecule type" value="Genomic_DNA"/>
</dbReference>
<dbReference type="SMR" id="A4WRM1"/>
<dbReference type="STRING" id="349102.Rsph17025_1134"/>
<dbReference type="KEGG" id="rsq:Rsph17025_1134"/>
<dbReference type="eggNOG" id="COG0448">
    <property type="taxonomic scope" value="Bacteria"/>
</dbReference>
<dbReference type="HOGENOM" id="CLU_029499_14_1_5"/>
<dbReference type="BioCyc" id="RSPH349102:G1G8M-1162-MONOMER"/>
<dbReference type="UniPathway" id="UPA00164"/>
<dbReference type="GO" id="GO:0005524">
    <property type="term" value="F:ATP binding"/>
    <property type="evidence" value="ECO:0007669"/>
    <property type="project" value="UniProtKB-KW"/>
</dbReference>
<dbReference type="GO" id="GO:0008878">
    <property type="term" value="F:glucose-1-phosphate adenylyltransferase activity"/>
    <property type="evidence" value="ECO:0007669"/>
    <property type="project" value="UniProtKB-UniRule"/>
</dbReference>
<dbReference type="GO" id="GO:0005978">
    <property type="term" value="P:glycogen biosynthetic process"/>
    <property type="evidence" value="ECO:0007669"/>
    <property type="project" value="UniProtKB-UniRule"/>
</dbReference>
<dbReference type="CDD" id="cd02508">
    <property type="entry name" value="ADP_Glucose_PP"/>
    <property type="match status" value="1"/>
</dbReference>
<dbReference type="CDD" id="cd04651">
    <property type="entry name" value="LbH_G1P_AT_C"/>
    <property type="match status" value="1"/>
</dbReference>
<dbReference type="Gene3D" id="2.160.10.10">
    <property type="entry name" value="Hexapeptide repeat proteins"/>
    <property type="match status" value="1"/>
</dbReference>
<dbReference type="Gene3D" id="3.90.550.10">
    <property type="entry name" value="Spore Coat Polysaccharide Biosynthesis Protein SpsA, Chain A"/>
    <property type="match status" value="1"/>
</dbReference>
<dbReference type="HAMAP" id="MF_00624">
    <property type="entry name" value="GlgC"/>
    <property type="match status" value="1"/>
</dbReference>
<dbReference type="InterPro" id="IPR011831">
    <property type="entry name" value="ADP-Glc_PPase"/>
</dbReference>
<dbReference type="InterPro" id="IPR005836">
    <property type="entry name" value="ADP_Glu_pyroP_CS"/>
</dbReference>
<dbReference type="InterPro" id="IPR023049">
    <property type="entry name" value="GlgC_bac"/>
</dbReference>
<dbReference type="InterPro" id="IPR056818">
    <property type="entry name" value="GlmU/GlgC-like_hexapep"/>
</dbReference>
<dbReference type="InterPro" id="IPR005835">
    <property type="entry name" value="NTP_transferase_dom"/>
</dbReference>
<dbReference type="InterPro" id="IPR029044">
    <property type="entry name" value="Nucleotide-diphossugar_trans"/>
</dbReference>
<dbReference type="InterPro" id="IPR011004">
    <property type="entry name" value="Trimer_LpxA-like_sf"/>
</dbReference>
<dbReference type="NCBIfam" id="TIGR02091">
    <property type="entry name" value="glgC"/>
    <property type="match status" value="1"/>
</dbReference>
<dbReference type="NCBIfam" id="NF001947">
    <property type="entry name" value="PRK00725.1"/>
    <property type="match status" value="1"/>
</dbReference>
<dbReference type="NCBIfam" id="NF002023">
    <property type="entry name" value="PRK00844.1"/>
    <property type="match status" value="1"/>
</dbReference>
<dbReference type="PANTHER" id="PTHR43523:SF2">
    <property type="entry name" value="GLUCOSE-1-PHOSPHATE ADENYLYLTRANSFERASE"/>
    <property type="match status" value="1"/>
</dbReference>
<dbReference type="PANTHER" id="PTHR43523">
    <property type="entry name" value="GLUCOSE-1-PHOSPHATE ADENYLYLTRANSFERASE-RELATED"/>
    <property type="match status" value="1"/>
</dbReference>
<dbReference type="Pfam" id="PF24894">
    <property type="entry name" value="Hexapep_GlmU"/>
    <property type="match status" value="1"/>
</dbReference>
<dbReference type="Pfam" id="PF00483">
    <property type="entry name" value="NTP_transferase"/>
    <property type="match status" value="1"/>
</dbReference>
<dbReference type="SUPFAM" id="SSF53448">
    <property type="entry name" value="Nucleotide-diphospho-sugar transferases"/>
    <property type="match status" value="1"/>
</dbReference>
<dbReference type="SUPFAM" id="SSF51161">
    <property type="entry name" value="Trimeric LpxA-like enzymes"/>
    <property type="match status" value="1"/>
</dbReference>
<dbReference type="PROSITE" id="PS00808">
    <property type="entry name" value="ADP_GLC_PYROPHOSPH_1"/>
    <property type="match status" value="1"/>
</dbReference>
<dbReference type="PROSITE" id="PS00809">
    <property type="entry name" value="ADP_GLC_PYROPHOSPH_2"/>
    <property type="match status" value="1"/>
</dbReference>
<evidence type="ECO:0000255" key="1">
    <source>
        <dbReference type="HAMAP-Rule" id="MF_00624"/>
    </source>
</evidence>
<comment type="function">
    <text evidence="1">Involved in the biosynthesis of ADP-glucose, a building block required for the elongation reactions to produce glycogen. Catalyzes the reaction between ATP and alpha-D-glucose 1-phosphate (G1P) to produce pyrophosphate and ADP-Glc.</text>
</comment>
<comment type="catalytic activity">
    <reaction evidence="1">
        <text>alpha-D-glucose 1-phosphate + ATP + H(+) = ADP-alpha-D-glucose + diphosphate</text>
        <dbReference type="Rhea" id="RHEA:12120"/>
        <dbReference type="ChEBI" id="CHEBI:15378"/>
        <dbReference type="ChEBI" id="CHEBI:30616"/>
        <dbReference type="ChEBI" id="CHEBI:33019"/>
        <dbReference type="ChEBI" id="CHEBI:57498"/>
        <dbReference type="ChEBI" id="CHEBI:58601"/>
        <dbReference type="EC" id="2.7.7.27"/>
    </reaction>
</comment>
<comment type="pathway">
    <text evidence="1">Glycan biosynthesis; glycogen biosynthesis.</text>
</comment>
<comment type="subunit">
    <text evidence="1">Homotetramer.</text>
</comment>
<comment type="similarity">
    <text evidence="1">Belongs to the bacterial/plant glucose-1-phosphate adenylyltransferase family.</text>
</comment>